<dbReference type="EC" id="2.7.7.6" evidence="1"/>
<dbReference type="EMBL" id="AJ938182">
    <property type="protein sequence ID" value="CAI80644.1"/>
    <property type="molecule type" value="Genomic_DNA"/>
</dbReference>
<dbReference type="RefSeq" id="WP_000257888.1">
    <property type="nucleotide sequence ID" value="NC_007622.1"/>
</dbReference>
<dbReference type="SMR" id="Q2YX59"/>
<dbReference type="KEGG" id="sab:SAB0956c"/>
<dbReference type="HOGENOM" id="CLU_187518_1_0_9"/>
<dbReference type="GO" id="GO:0000428">
    <property type="term" value="C:DNA-directed RNA polymerase complex"/>
    <property type="evidence" value="ECO:0007669"/>
    <property type="project" value="UniProtKB-KW"/>
</dbReference>
<dbReference type="GO" id="GO:0003677">
    <property type="term" value="F:DNA binding"/>
    <property type="evidence" value="ECO:0007669"/>
    <property type="project" value="UniProtKB-UniRule"/>
</dbReference>
<dbReference type="GO" id="GO:0003899">
    <property type="term" value="F:DNA-directed RNA polymerase activity"/>
    <property type="evidence" value="ECO:0007669"/>
    <property type="project" value="UniProtKB-UniRule"/>
</dbReference>
<dbReference type="GO" id="GO:0006351">
    <property type="term" value="P:DNA-templated transcription"/>
    <property type="evidence" value="ECO:0007669"/>
    <property type="project" value="UniProtKB-UniRule"/>
</dbReference>
<dbReference type="Gene3D" id="3.10.20.730">
    <property type="entry name" value="RNAP, epsilon subunit-like"/>
    <property type="match status" value="1"/>
</dbReference>
<dbReference type="HAMAP" id="MF_01553">
    <property type="entry name" value="RNApol_bact_RpoY"/>
    <property type="match status" value="1"/>
</dbReference>
<dbReference type="InterPro" id="IPR009907">
    <property type="entry name" value="RpoY"/>
</dbReference>
<dbReference type="NCBIfam" id="NF010188">
    <property type="entry name" value="PRK13667.1"/>
    <property type="match status" value="1"/>
</dbReference>
<dbReference type="Pfam" id="PF07288">
    <property type="entry name" value="RpoY"/>
    <property type="match status" value="1"/>
</dbReference>
<protein>
    <recommendedName>
        <fullName evidence="1">DNA-directed RNA polymerase subunit epsilon</fullName>
        <shortName evidence="1">RNAP epsilon subunit</shortName>
        <ecNumber evidence="1">2.7.7.6</ecNumber>
    </recommendedName>
    <alternativeName>
        <fullName evidence="1">RNA polymerase epsilon subunit</fullName>
    </alternativeName>
    <alternativeName>
        <fullName evidence="1">Transcriptase subunit epsilon</fullName>
    </alternativeName>
</protein>
<gene>
    <name evidence="1" type="primary">rpoY</name>
    <name type="ordered locus">SAB0956c</name>
</gene>
<feature type="chain" id="PRO_1000068878" description="DNA-directed RNA polymerase subunit epsilon">
    <location>
        <begin position="1"/>
        <end position="72"/>
    </location>
</feature>
<proteinExistence type="inferred from homology"/>
<keyword id="KW-0240">DNA-directed RNA polymerase</keyword>
<keyword id="KW-0548">Nucleotidyltransferase</keyword>
<keyword id="KW-0804">Transcription</keyword>
<keyword id="KW-0808">Transferase</keyword>
<comment type="function">
    <text evidence="1">A non-essential component of RNA polymerase (RNAP).</text>
</comment>
<comment type="catalytic activity">
    <reaction evidence="1">
        <text>RNA(n) + a ribonucleoside 5'-triphosphate = RNA(n+1) + diphosphate</text>
        <dbReference type="Rhea" id="RHEA:21248"/>
        <dbReference type="Rhea" id="RHEA-COMP:14527"/>
        <dbReference type="Rhea" id="RHEA-COMP:17342"/>
        <dbReference type="ChEBI" id="CHEBI:33019"/>
        <dbReference type="ChEBI" id="CHEBI:61557"/>
        <dbReference type="ChEBI" id="CHEBI:140395"/>
        <dbReference type="EC" id="2.7.7.6"/>
    </reaction>
</comment>
<comment type="subunit">
    <text evidence="1">RNAP is composed of a core of 2 alpha, a beta and a beta' subunit. The core is associated with a delta subunit, and at least one of epsilon or omega. When a sigma factor is associated with the core the holoenzyme is formed, which can initiate transcription.</text>
</comment>
<comment type="similarity">
    <text evidence="1">Belongs to the RNA polymerase subunit epsilon family.</text>
</comment>
<evidence type="ECO:0000255" key="1">
    <source>
        <dbReference type="HAMAP-Rule" id="MF_01553"/>
    </source>
</evidence>
<reference key="1">
    <citation type="journal article" date="2007" name="PLoS ONE">
        <title>Molecular correlates of host specialization in Staphylococcus aureus.</title>
        <authorList>
            <person name="Herron-Olson L."/>
            <person name="Fitzgerald J.R."/>
            <person name="Musser J.M."/>
            <person name="Kapur V."/>
        </authorList>
    </citation>
    <scope>NUCLEOTIDE SEQUENCE [LARGE SCALE GENOMIC DNA]</scope>
    <source>
        <strain>bovine RF122 / ET3-1</strain>
    </source>
</reference>
<accession>Q2YX59</accession>
<organism>
    <name type="scientific">Staphylococcus aureus (strain bovine RF122 / ET3-1)</name>
    <dbReference type="NCBI Taxonomy" id="273036"/>
    <lineage>
        <taxon>Bacteria</taxon>
        <taxon>Bacillati</taxon>
        <taxon>Bacillota</taxon>
        <taxon>Bacilli</taxon>
        <taxon>Bacillales</taxon>
        <taxon>Staphylococcaceae</taxon>
        <taxon>Staphylococcus</taxon>
    </lineage>
</organism>
<name>RPOY_STAAB</name>
<sequence length="72" mass="8752">MAVFKVFYQHNRDEVIVRENTQSLYVEAQTEEQVRRYLKDRNFNIEFITKLEGAHLDYEKENSEHFNVEIAK</sequence>